<sequence>VPIQKVQDDTKTLIKTIVTRISDISHTQSVSSKQKVTGLDFIPGLHPILTLSKMDQTLAVYQQILTSMPSRNMIQISNDLENLRDLLHVLAFSKSCHLPWASGLETLDSLGGVLEASGYSTEVVALSRLQGSLQDMLWQLDLSPGC</sequence>
<feature type="chain" id="PRO_0000160605" description="Leptin">
    <location>
        <begin position="1"/>
        <end position="146"/>
    </location>
</feature>
<feature type="disulfide bond" evidence="1">
    <location>
        <begin position="96"/>
        <end position="146"/>
    </location>
</feature>
<dbReference type="EMBL" id="U72872">
    <property type="protein sequence ID" value="AAB17091.1"/>
    <property type="molecule type" value="Genomic_DNA"/>
</dbReference>
<dbReference type="SMR" id="Q95189"/>
<dbReference type="STRING" id="9593.ENSGGOP00000000941"/>
<dbReference type="eggNOG" id="ENOG502S5K5">
    <property type="taxonomic scope" value="Eukaryota"/>
</dbReference>
<dbReference type="HOGENOM" id="CLU_132715_0_0_1"/>
<dbReference type="InParanoid" id="Q95189"/>
<dbReference type="Proteomes" id="UP000001519">
    <property type="component" value="Unplaced"/>
</dbReference>
<dbReference type="GO" id="GO:0005615">
    <property type="term" value="C:extracellular space"/>
    <property type="evidence" value="ECO:0000318"/>
    <property type="project" value="GO_Central"/>
</dbReference>
<dbReference type="GO" id="GO:0005179">
    <property type="term" value="F:hormone activity"/>
    <property type="evidence" value="ECO:0000318"/>
    <property type="project" value="GO_Central"/>
</dbReference>
<dbReference type="GO" id="GO:0051428">
    <property type="term" value="F:peptide hormone receptor binding"/>
    <property type="evidence" value="ECO:0000318"/>
    <property type="project" value="GO_Central"/>
</dbReference>
<dbReference type="GO" id="GO:1990051">
    <property type="term" value="P:activation of protein kinase C activity"/>
    <property type="evidence" value="ECO:0000250"/>
    <property type="project" value="UniProtKB"/>
</dbReference>
<dbReference type="GO" id="GO:0098868">
    <property type="term" value="P:bone growth"/>
    <property type="evidence" value="ECO:0000250"/>
    <property type="project" value="UniProtKB"/>
</dbReference>
<dbReference type="GO" id="GO:0044320">
    <property type="term" value="P:cellular response to leptin stimulus"/>
    <property type="evidence" value="ECO:0000250"/>
    <property type="project" value="UniProtKB"/>
</dbReference>
<dbReference type="GO" id="GO:0006112">
    <property type="term" value="P:energy reserve metabolic process"/>
    <property type="evidence" value="ECO:0000318"/>
    <property type="project" value="GO_Central"/>
</dbReference>
<dbReference type="GO" id="GO:0050892">
    <property type="term" value="P:intestinal absorption"/>
    <property type="evidence" value="ECO:0000250"/>
    <property type="project" value="UniProtKB"/>
</dbReference>
<dbReference type="GO" id="GO:0033210">
    <property type="term" value="P:leptin-mediated signaling pathway"/>
    <property type="evidence" value="ECO:0000250"/>
    <property type="project" value="UniProtKB"/>
</dbReference>
<dbReference type="GO" id="GO:0006629">
    <property type="term" value="P:lipid metabolic process"/>
    <property type="evidence" value="ECO:0000318"/>
    <property type="project" value="GO_Central"/>
</dbReference>
<dbReference type="GO" id="GO:0038108">
    <property type="term" value="P:negative regulation of appetite by leptin-mediated signaling pathway"/>
    <property type="evidence" value="ECO:0000250"/>
    <property type="project" value="UniProtKB"/>
</dbReference>
<dbReference type="GO" id="GO:0010507">
    <property type="term" value="P:negative regulation of autophagy"/>
    <property type="evidence" value="ECO:0000250"/>
    <property type="project" value="UniProtKB"/>
</dbReference>
<dbReference type="GO" id="GO:0046325">
    <property type="term" value="P:negative regulation of D-glucose import"/>
    <property type="evidence" value="ECO:0000250"/>
    <property type="project" value="UniProtKB"/>
</dbReference>
<dbReference type="GO" id="GO:0006909">
    <property type="term" value="P:phagocytosis"/>
    <property type="evidence" value="ECO:0000250"/>
    <property type="project" value="UniProtKB"/>
</dbReference>
<dbReference type="GO" id="GO:0032735">
    <property type="term" value="P:positive regulation of interleukin-12 production"/>
    <property type="evidence" value="ECO:0000250"/>
    <property type="project" value="UniProtKB"/>
</dbReference>
<dbReference type="GO" id="GO:0032755">
    <property type="term" value="P:positive regulation of interleukin-6 production"/>
    <property type="evidence" value="ECO:0000250"/>
    <property type="project" value="UniProtKB"/>
</dbReference>
<dbReference type="GO" id="GO:0032757">
    <property type="term" value="P:positive regulation of interleukin-8 production"/>
    <property type="evidence" value="ECO:0000250"/>
    <property type="project" value="UniProtKB"/>
</dbReference>
<dbReference type="GO" id="GO:0043410">
    <property type="term" value="P:positive regulation of MAPK cascade"/>
    <property type="evidence" value="ECO:0000250"/>
    <property type="project" value="UniProtKB"/>
</dbReference>
<dbReference type="GO" id="GO:1900745">
    <property type="term" value="P:positive regulation of p38MAPK cascade"/>
    <property type="evidence" value="ECO:0000250"/>
    <property type="project" value="UniProtKB"/>
</dbReference>
<dbReference type="GO" id="GO:0051897">
    <property type="term" value="P:positive regulation of phosphatidylinositol 3-kinase/protein kinase B signal transduction"/>
    <property type="evidence" value="ECO:0000250"/>
    <property type="project" value="UniProtKB"/>
</dbReference>
<dbReference type="GO" id="GO:0046427">
    <property type="term" value="P:positive regulation of receptor signaling pathway via JAK-STAT"/>
    <property type="evidence" value="ECO:0000250"/>
    <property type="project" value="UniProtKB"/>
</dbReference>
<dbReference type="GO" id="GO:0042102">
    <property type="term" value="P:positive regulation of T cell proliferation"/>
    <property type="evidence" value="ECO:0000250"/>
    <property type="project" value="UniProtKB"/>
</dbReference>
<dbReference type="GO" id="GO:0032008">
    <property type="term" value="P:positive regulation of TOR signaling"/>
    <property type="evidence" value="ECO:0000250"/>
    <property type="project" value="UniProtKB"/>
</dbReference>
<dbReference type="GO" id="GO:0032760">
    <property type="term" value="P:positive regulation of tumor necrosis factor production"/>
    <property type="evidence" value="ECO:0000250"/>
    <property type="project" value="UniProtKB"/>
</dbReference>
<dbReference type="GO" id="GO:0032310">
    <property type="term" value="P:prostaglandin secretion"/>
    <property type="evidence" value="ECO:0000250"/>
    <property type="project" value="UniProtKB"/>
</dbReference>
<dbReference type="GO" id="GO:0045765">
    <property type="term" value="P:regulation of angiogenesis"/>
    <property type="evidence" value="ECO:0000250"/>
    <property type="project" value="UniProtKB"/>
</dbReference>
<dbReference type="GO" id="GO:0046850">
    <property type="term" value="P:regulation of bone remodeling"/>
    <property type="evidence" value="ECO:0000250"/>
    <property type="project" value="UniProtKB"/>
</dbReference>
<dbReference type="GO" id="GO:0090335">
    <property type="term" value="P:regulation of brown fat cell differentiation"/>
    <property type="evidence" value="ECO:0000250"/>
    <property type="project" value="UniProtKB"/>
</dbReference>
<dbReference type="GO" id="GO:0051726">
    <property type="term" value="P:regulation of cell cycle"/>
    <property type="evidence" value="ECO:0000250"/>
    <property type="project" value="UniProtKB"/>
</dbReference>
<dbReference type="GO" id="GO:1900015">
    <property type="term" value="P:regulation of cytokine production involved in inflammatory response"/>
    <property type="evidence" value="ECO:0000250"/>
    <property type="project" value="UniProtKB"/>
</dbReference>
<dbReference type="GO" id="GO:0001936">
    <property type="term" value="P:regulation of endothelial cell proliferation"/>
    <property type="evidence" value="ECO:0000250"/>
    <property type="project" value="UniProtKB"/>
</dbReference>
<dbReference type="GO" id="GO:0032814">
    <property type="term" value="P:regulation of natural killer cell activation"/>
    <property type="evidence" value="ECO:0000250"/>
    <property type="project" value="UniProtKB"/>
</dbReference>
<dbReference type="GO" id="GO:0042269">
    <property type="term" value="P:regulation of natural killer cell mediated cytotoxicity"/>
    <property type="evidence" value="ECO:0000250"/>
    <property type="project" value="UniProtKB"/>
</dbReference>
<dbReference type="GO" id="GO:0032817">
    <property type="term" value="P:regulation of natural killer cell proliferation"/>
    <property type="evidence" value="ECO:0000250"/>
    <property type="project" value="UniProtKB"/>
</dbReference>
<dbReference type="GO" id="GO:0050999">
    <property type="term" value="P:regulation of nitric-oxide synthase activity"/>
    <property type="evidence" value="ECO:0000250"/>
    <property type="project" value="UniProtKB"/>
</dbReference>
<dbReference type="GO" id="GO:0032868">
    <property type="term" value="P:response to insulin"/>
    <property type="evidence" value="ECO:0000318"/>
    <property type="project" value="GO_Central"/>
</dbReference>
<dbReference type="GO" id="GO:0019953">
    <property type="term" value="P:sexual reproduction"/>
    <property type="evidence" value="ECO:0000250"/>
    <property type="project" value="UniProtKB"/>
</dbReference>
<dbReference type="GO" id="GO:0030217">
    <property type="term" value="P:T cell differentiation"/>
    <property type="evidence" value="ECO:0000250"/>
    <property type="project" value="UniProtKB"/>
</dbReference>
<dbReference type="FunFam" id="1.20.1250.10:FF:000008">
    <property type="entry name" value="Leptin"/>
    <property type="match status" value="1"/>
</dbReference>
<dbReference type="Gene3D" id="1.20.1250.10">
    <property type="match status" value="1"/>
</dbReference>
<dbReference type="InterPro" id="IPR009079">
    <property type="entry name" value="4_helix_cytokine-like_core"/>
</dbReference>
<dbReference type="InterPro" id="IPR000065">
    <property type="entry name" value="Leptin"/>
</dbReference>
<dbReference type="PANTHER" id="PTHR11724">
    <property type="entry name" value="LEPTIN"/>
    <property type="match status" value="1"/>
</dbReference>
<dbReference type="PANTHER" id="PTHR11724:SF1">
    <property type="entry name" value="LEPTIN"/>
    <property type="match status" value="1"/>
</dbReference>
<dbReference type="Pfam" id="PF02024">
    <property type="entry name" value="Leptin"/>
    <property type="match status" value="1"/>
</dbReference>
<dbReference type="PIRSF" id="PIRSF001837">
    <property type="entry name" value="Leptin"/>
    <property type="match status" value="1"/>
</dbReference>
<dbReference type="PRINTS" id="PR00495">
    <property type="entry name" value="LEPTIN"/>
</dbReference>
<dbReference type="SUPFAM" id="SSF47266">
    <property type="entry name" value="4-helical cytokines"/>
    <property type="match status" value="1"/>
</dbReference>
<gene>
    <name type="primary">LEP</name>
    <name type="synonym">OB</name>
</gene>
<name>LEP_GORGO</name>
<accession>Q95189</accession>
<organism>
    <name type="scientific">Gorilla gorilla gorilla</name>
    <name type="common">Western lowland gorilla</name>
    <dbReference type="NCBI Taxonomy" id="9595"/>
    <lineage>
        <taxon>Eukaryota</taxon>
        <taxon>Metazoa</taxon>
        <taxon>Chordata</taxon>
        <taxon>Craniata</taxon>
        <taxon>Vertebrata</taxon>
        <taxon>Euteleostomi</taxon>
        <taxon>Mammalia</taxon>
        <taxon>Eutheria</taxon>
        <taxon>Euarchontoglires</taxon>
        <taxon>Primates</taxon>
        <taxon>Haplorrhini</taxon>
        <taxon>Catarrhini</taxon>
        <taxon>Hominidae</taxon>
        <taxon>Gorilla</taxon>
    </lineage>
</organism>
<proteinExistence type="inferred from homology"/>
<keyword id="KW-1015">Disulfide bond</keyword>
<keyword id="KW-0550">Obesity</keyword>
<keyword id="KW-1185">Reference proteome</keyword>
<keyword id="KW-0964">Secreted</keyword>
<evidence type="ECO:0000250" key="1"/>
<evidence type="ECO:0000250" key="2">
    <source>
        <dbReference type="UniProtKB" id="P41159"/>
    </source>
</evidence>
<evidence type="ECO:0000250" key="3">
    <source>
        <dbReference type="UniProtKB" id="P41160"/>
    </source>
</evidence>
<evidence type="ECO:0000250" key="4">
    <source>
        <dbReference type="UniProtKB" id="P50596"/>
    </source>
</evidence>
<evidence type="ECO:0000305" key="5"/>
<reference key="1">
    <citation type="submission" date="1996-10" db="EMBL/GenBank/DDBJ databases">
        <title>Gorilla leptin genomic sequence.</title>
        <authorList>
            <person name="Smith D.P."/>
            <person name="Zhang X."/>
            <person name="Hsiung H.M."/>
        </authorList>
    </citation>
    <scope>NUCLEOTIDE SEQUENCE [GENOMIC DNA]</scope>
</reference>
<protein>
    <recommendedName>
        <fullName>Leptin</fullName>
    </recommendedName>
    <alternativeName>
        <fullName>Obesity factor</fullName>
    </alternativeName>
</protein>
<comment type="function">
    <text evidence="2 3 4">Key player in the regulation of energy balance and body weight control. Once released into the circulation, has central and peripheral effects by binding LEPR, found in many tissues, which results in the activation of several major signaling pathways (By similarity). In the hypothalamus, acts as an appetite-regulating factor that induces a decrease in food intake and an increase in energy consumption by inducing anorexinogenic factors and suppressing orexigenic neuropeptides, also regulates bone mass and secretion of hypothalamo-pituitary-adrenal hormones. In the periphery, increases basal metabolism, influences reproductive function, regulates pancreatic beta-cell function and insulin secretion, is pro-angiogenic for endothelial cell and affects innate and adaptive immunity (By similarity). In the arcuate nucleus of the hypothalamus, activates by depolarization POMC neurons inducing FOS and SOCS3 expression to release anorexigenic peptides and inhibits by hyperpolarization NPY neurons inducing SOCS3 with a consequent reduction on release of orexigenic peptides (By similarity). In addition to its known satiety inducing effect, has a modulatory role in nutrient absorption. In the intestine, reduces glucose absorption by enterocytes by activating PKC and leading to a sequential activation of p38, PI3K and ERK signaling pathways which exerts an inhibitory effect on glucose absorption (By similarity). Acts as a growth factor on certain tissues, through the activation of different signaling pathways increases expression of genes involved in cell cycle regulation such as CCND1, via JAK2-STAT3 pathway, or VEGFA, via MAPK1/3 and PI3K-AKT1 pathways (By similarity). May also play an apoptotic role via JAK2-STAT3 pathway and up-regulation of BIRC5 expression. Pro-angiogenic, has mitogenic activity on vascular endothelial cells and plays a role in matrix remodeling by regulating the expression of matrix metalloproteinases (MMPs) and tissue inhibitors of metalloproteinases (TIMPs). In innate immunity, modulates the activity and function of neutrophils by increasing chemotaxis and the secretion of oxygen radicals. Increases phagocytosis by macrophages and enhances secretion of pro-inflammatory mediators. Increases cytotoxic ability of NK cells. Plays a pro-inflammatory role, in synergy with IL1B, by inducing NOS2 which promotes the production of IL6, IL8 and Prostaglandin E2, through a signaling pathway that involves JAK2, PI3K, MAP2K1/MEK1 and MAPK14/p38 (By similarity). In adaptive immunity, promotes the switch of memory T-cells towards T helper-1 cell immune responses (By similarity). Increases CD4(+)CD25(-) T-cell proliferation and reduces autophagy during TCR (T-cell receptor) stimulation, through MTOR signaling pathway activation and BCL2 up-regulation (By similarity).</text>
</comment>
<comment type="subcellular location">
    <subcellularLocation>
        <location evidence="2">Secreted</location>
    </subcellularLocation>
</comment>
<comment type="similarity">
    <text evidence="5">Belongs to the leptin family.</text>
</comment>